<comment type="function">
    <text evidence="1">Plays a central role in 2-thiolation of mcm(5)S(2)U at tRNA wobble positions of tRNA(Lys), tRNA(Glu) and tRNA(Gln). May act by forming a heterodimer with NCS6 that ligates sulfur from thiocarboxylated URM1 onto the uridine of tRNAs at wobble position. Prior mcm(5) tRNA modification by the elongator complex is required for 2-thiolation. May also be involved in protein urmylation.</text>
</comment>
<comment type="pathway">
    <text evidence="1">tRNA modification; 5-methoxycarbonylmethyl-2-thiouridine-tRNA biosynthesis.</text>
</comment>
<comment type="subcellular location">
    <subcellularLocation>
        <location evidence="1">Cytoplasm</location>
    </subcellularLocation>
</comment>
<comment type="similarity">
    <text evidence="1">Belongs to the CTU2/NCS2 family.</text>
</comment>
<protein>
    <recommendedName>
        <fullName evidence="1">Cytoplasmic tRNA 2-thiolation protein 2</fullName>
    </recommendedName>
</protein>
<dbReference type="EMBL" id="CH476656">
    <property type="protein sequence ID" value="EDN05978.1"/>
    <property type="molecule type" value="Genomic_DNA"/>
</dbReference>
<dbReference type="STRING" id="339724.A6QYX4"/>
<dbReference type="KEGG" id="aje:HCAG_02581"/>
<dbReference type="VEuPathDB" id="FungiDB:HCAG_02581"/>
<dbReference type="HOGENOM" id="CLU_024534_3_0_1"/>
<dbReference type="OMA" id="EGDSTWA"/>
<dbReference type="OrthoDB" id="797at299071"/>
<dbReference type="UniPathway" id="UPA00988"/>
<dbReference type="Proteomes" id="UP000009297">
    <property type="component" value="Unassembled WGS sequence"/>
</dbReference>
<dbReference type="GO" id="GO:0005829">
    <property type="term" value="C:cytosol"/>
    <property type="evidence" value="ECO:0000250"/>
    <property type="project" value="UniProtKB"/>
</dbReference>
<dbReference type="GO" id="GO:0016779">
    <property type="term" value="F:nucleotidyltransferase activity"/>
    <property type="evidence" value="ECO:0007669"/>
    <property type="project" value="UniProtKB-UniRule"/>
</dbReference>
<dbReference type="GO" id="GO:0016783">
    <property type="term" value="F:sulfurtransferase activity"/>
    <property type="evidence" value="ECO:0007669"/>
    <property type="project" value="TreeGrafter"/>
</dbReference>
<dbReference type="GO" id="GO:0000049">
    <property type="term" value="F:tRNA binding"/>
    <property type="evidence" value="ECO:0007669"/>
    <property type="project" value="InterPro"/>
</dbReference>
<dbReference type="GO" id="GO:0032447">
    <property type="term" value="P:protein urmylation"/>
    <property type="evidence" value="ECO:0007669"/>
    <property type="project" value="UniProtKB-UniRule"/>
</dbReference>
<dbReference type="GO" id="GO:0034227">
    <property type="term" value="P:tRNA thio-modification"/>
    <property type="evidence" value="ECO:0000250"/>
    <property type="project" value="UniProtKB"/>
</dbReference>
<dbReference type="GO" id="GO:0002143">
    <property type="term" value="P:tRNA wobble position uridine thiolation"/>
    <property type="evidence" value="ECO:0007669"/>
    <property type="project" value="TreeGrafter"/>
</dbReference>
<dbReference type="GO" id="GO:0002098">
    <property type="term" value="P:tRNA wobble uridine modification"/>
    <property type="evidence" value="ECO:0000250"/>
    <property type="project" value="UniProtKB"/>
</dbReference>
<dbReference type="Gene3D" id="3.40.50.620">
    <property type="entry name" value="HUPs"/>
    <property type="match status" value="1"/>
</dbReference>
<dbReference type="HAMAP" id="MF_03054">
    <property type="entry name" value="CTU2"/>
    <property type="match status" value="1"/>
</dbReference>
<dbReference type="InterPro" id="IPR019407">
    <property type="entry name" value="CTU2"/>
</dbReference>
<dbReference type="InterPro" id="IPR014729">
    <property type="entry name" value="Rossmann-like_a/b/a_fold"/>
</dbReference>
<dbReference type="PANTHER" id="PTHR20882">
    <property type="entry name" value="CYTOPLASMIC TRNA 2-THIOLATION PROTEIN 2"/>
    <property type="match status" value="1"/>
</dbReference>
<dbReference type="PANTHER" id="PTHR20882:SF14">
    <property type="entry name" value="CYTOPLASMIC TRNA 2-THIOLATION PROTEIN 2"/>
    <property type="match status" value="1"/>
</dbReference>
<dbReference type="Pfam" id="PF10288">
    <property type="entry name" value="CTU2"/>
    <property type="match status" value="1"/>
</dbReference>
<dbReference type="SUPFAM" id="SSF52402">
    <property type="entry name" value="Adenine nucleotide alpha hydrolases-like"/>
    <property type="match status" value="1"/>
</dbReference>
<organism>
    <name type="scientific">Ajellomyces capsulatus (strain NAm1 / WU24)</name>
    <name type="common">Darling's disease fungus</name>
    <name type="synonym">Histoplasma capsulatum</name>
    <dbReference type="NCBI Taxonomy" id="2059318"/>
    <lineage>
        <taxon>Eukaryota</taxon>
        <taxon>Fungi</taxon>
        <taxon>Dikarya</taxon>
        <taxon>Ascomycota</taxon>
        <taxon>Pezizomycotina</taxon>
        <taxon>Eurotiomycetes</taxon>
        <taxon>Eurotiomycetidae</taxon>
        <taxon>Onygenales</taxon>
        <taxon>Ajellomycetaceae</taxon>
        <taxon>Histoplasma</taxon>
    </lineage>
</organism>
<sequence length="359" mass="39965">MTLDSRYGGEVYGGSKVVKRMEKYRPQNAPKNRQRKLLLPLSYGISSSTLLHILNLQLERQISSGLGRRAYDIHVLNIGTCEQSDSHRLGLFREAYPLHTYTQVPLHSIFKHDTTIKDVISEYGGPEFADDPSKTDQERLDIFRLSLSTATARADIDGILLTRLVVAIAKEQDCDGILWGDSDTRLASKALSNVAKGRGFSVPWDVCDGMSPWGIQFNFPMRDLFKFELSTYASLALPKSLNVVDSERPSVDNLSNKNMSIEDLLAHYVETQGQKYPGVMANIVRTINKLQPQSADTDHKCMLCGMPVDYSGEDPAIIGGQGSSQYTLQDWRERPVAGTLCYGCARTRLDLVPPRSVSS</sequence>
<name>CTU2_AJECN</name>
<keyword id="KW-0963">Cytoplasm</keyword>
<keyword id="KW-1185">Reference proteome</keyword>
<keyword id="KW-0819">tRNA processing</keyword>
<reference key="1">
    <citation type="journal article" date="2009" name="Genome Res.">
        <title>Comparative genomic analyses of the human fungal pathogens Coccidioides and their relatives.</title>
        <authorList>
            <person name="Sharpton T.J."/>
            <person name="Stajich J.E."/>
            <person name="Rounsley S.D."/>
            <person name="Gardner M.J."/>
            <person name="Wortman J.R."/>
            <person name="Jordar V.S."/>
            <person name="Maiti R."/>
            <person name="Kodira C.D."/>
            <person name="Neafsey D.E."/>
            <person name="Zeng Q."/>
            <person name="Hung C.-Y."/>
            <person name="McMahan C."/>
            <person name="Muszewska A."/>
            <person name="Grynberg M."/>
            <person name="Mandel M.A."/>
            <person name="Kellner E.M."/>
            <person name="Barker B.M."/>
            <person name="Galgiani J.N."/>
            <person name="Orbach M.J."/>
            <person name="Kirkland T.N."/>
            <person name="Cole G.T."/>
            <person name="Henn M.R."/>
            <person name="Birren B.W."/>
            <person name="Taylor J.W."/>
        </authorList>
    </citation>
    <scope>NUCLEOTIDE SEQUENCE [LARGE SCALE GENOMIC DNA]</scope>
    <source>
        <strain>NAm1 / WU24</strain>
    </source>
</reference>
<proteinExistence type="inferred from homology"/>
<accession>A6QYX4</accession>
<gene>
    <name evidence="1" type="primary">NCS2</name>
    <name evidence="1" type="synonym">CTU2</name>
    <name type="ORF">HCAG_02581</name>
</gene>
<feature type="chain" id="PRO_0000369285" description="Cytoplasmic tRNA 2-thiolation protein 2">
    <location>
        <begin position="1"/>
        <end position="359"/>
    </location>
</feature>
<evidence type="ECO:0000255" key="1">
    <source>
        <dbReference type="HAMAP-Rule" id="MF_03054"/>
    </source>
</evidence>